<protein>
    <recommendedName>
        <fullName>Probable Vpr-like protein</fullName>
    </recommendedName>
    <alternativeName>
        <fullName>ORF2</fullName>
    </alternativeName>
    <alternativeName>
        <fullName>OrfA</fullName>
    </alternativeName>
    <alternativeName>
        <fullName>Protein Tat</fullName>
    </alternativeName>
</protein>
<name>VPRL_FIVPE</name>
<comment type="function">
    <text evidence="1">Seems to function as a Vpr-like protein, since it mediates host cell cycle arrest in G2 phase. Cell cycle arrest creates a favorable environment for maximizing viral expression and production (By similarity).</text>
</comment>
<comment type="subcellular location">
    <subcellularLocation>
        <location evidence="2">Virion</location>
    </subcellularLocation>
    <subcellularLocation>
        <location>Host nucleus</location>
    </subcellularLocation>
    <text evidence="1">Contains both nuclear import and nuclear export signals.</text>
</comment>
<comment type="caution">
    <text evidence="2">Was first thought to be the equivalent of lentiviral Tat protein.</text>
</comment>
<evidence type="ECO:0000250" key="1"/>
<evidence type="ECO:0000305" key="2"/>
<accession>Q66013</accession>
<organism>
    <name type="scientific">Feline immunodeficiency virus (isolate Petaluma)</name>
    <name type="common">FIV</name>
    <dbReference type="NCBI Taxonomy" id="11674"/>
    <lineage>
        <taxon>Viruses</taxon>
        <taxon>Riboviria</taxon>
        <taxon>Pararnavirae</taxon>
        <taxon>Artverviricota</taxon>
        <taxon>Revtraviricetes</taxon>
        <taxon>Ortervirales</taxon>
        <taxon>Retroviridae</taxon>
        <taxon>Orthoretrovirinae</taxon>
        <taxon>Lentivirus</taxon>
        <taxon>Feline immunodeficiency virus</taxon>
    </lineage>
</organism>
<organismHost>
    <name type="scientific">Felidae</name>
    <name type="common">cat family</name>
    <dbReference type="NCBI Taxonomy" id="9681"/>
</organismHost>
<feature type="chain" id="PRO_0000334542" description="Probable Vpr-like protein">
    <location>
        <begin position="1"/>
        <end position="78"/>
    </location>
</feature>
<feature type="short sequence motif" description="Nuclear export signal" evidence="1">
    <location>
        <begin position="35"/>
        <end position="43"/>
    </location>
</feature>
<feature type="short sequence motif" description="Nuclear localization signal" evidence="1">
    <location>
        <begin position="45"/>
        <end position="54"/>
    </location>
</feature>
<sequence length="78" mass="9649">MEDIIVLFNRVTEKLEKELAIRIFVLAHQLERDKAIRLLQGLFWRYRFKKPRVDYCLCWWCCKFYYWQLQSTLSITTA</sequence>
<keyword id="KW-1048">Host nucleus</keyword>
<keyword id="KW-1185">Reference proteome</keyword>
<keyword id="KW-0946">Virion</keyword>
<dbReference type="EMBL" id="M25381">
    <property type="protein sequence ID" value="AAB59939.1"/>
    <property type="molecule type" value="Genomic_RNA"/>
</dbReference>
<dbReference type="RefSeq" id="NP_040975.1">
    <property type="nucleotide sequence ID" value="NC_001482.1"/>
</dbReference>
<dbReference type="SMR" id="Q66013"/>
<dbReference type="GeneID" id="1724707"/>
<dbReference type="KEGG" id="vg:1724707"/>
<dbReference type="Proteomes" id="UP000242267">
    <property type="component" value="Segment"/>
</dbReference>
<dbReference type="GO" id="GO:0042025">
    <property type="term" value="C:host cell nucleus"/>
    <property type="evidence" value="ECO:0007669"/>
    <property type="project" value="UniProtKB-SubCell"/>
</dbReference>
<dbReference type="GO" id="GO:0044423">
    <property type="term" value="C:virion component"/>
    <property type="evidence" value="ECO:0007669"/>
    <property type="project" value="UniProtKB-KW"/>
</dbReference>
<reference key="1">
    <citation type="journal article" date="1989" name="Proc. Natl. Acad. Sci. U.S.A.">
        <title>Nucleotide sequence and genomic organization of feline immunodeficiency virus.</title>
        <authorList>
            <person name="Talbott R.L."/>
            <person name="Sparger E.E."/>
            <person name="Lovelace K.M."/>
            <person name="Fitch W.M."/>
            <person name="Pedersen N.C."/>
            <person name="Luciw P.A."/>
            <person name="Elder J.H."/>
        </authorList>
    </citation>
    <scope>NUCLEOTIDE SEQUENCE [GENOMIC RNA]</scope>
    <source>
        <strain>Clone 34TF10</strain>
    </source>
</reference>
<reference key="2">
    <citation type="journal article" date="1989" name="Proc. Natl. Acad. Sci. U.S.A.">
        <title>Nucleotide sequence analysis of feline immunodeficiency virus: genome organization and relationship to other lentiviruses.</title>
        <authorList>
            <person name="Olmsted R.A."/>
            <person name="Hirsch V.M."/>
            <person name="Purcell R.H."/>
            <person name="Johnson P.R."/>
        </authorList>
    </citation>
    <scope>NUCLEOTIDE SEQUENCE [GENOMIC RNA]</scope>
    <source>
        <strain>Clone FIV-14</strain>
    </source>
</reference>
<proteinExistence type="inferred from homology"/>